<gene>
    <name type="primary">Eloa</name>
    <name type="synonym">Tceb3</name>
</gene>
<feature type="chain" id="PRO_0000086962" description="Elongin-A">
    <location>
        <begin position="1"/>
        <end position="773"/>
    </location>
</feature>
<feature type="domain" description="TFIIS N-terminal" evidence="4">
    <location>
        <begin position="4"/>
        <end position="79"/>
    </location>
</feature>
<feature type="domain" description="F-box" evidence="3">
    <location>
        <begin position="565"/>
        <end position="609"/>
    </location>
</feature>
<feature type="region of interest" description="Disordered" evidence="5">
    <location>
        <begin position="79"/>
        <end position="480"/>
    </location>
</feature>
<feature type="region of interest" description="Activation domain" evidence="8">
    <location>
        <begin position="521"/>
        <end position="680"/>
    </location>
</feature>
<feature type="region of interest" description="BC-box" evidence="8">
    <location>
        <begin position="549"/>
        <end position="558"/>
    </location>
</feature>
<feature type="region of interest" description="Disordered" evidence="5">
    <location>
        <begin position="671"/>
        <end position="747"/>
    </location>
</feature>
<feature type="compositionally biased region" description="Basic and acidic residues" evidence="5">
    <location>
        <begin position="79"/>
        <end position="93"/>
    </location>
</feature>
<feature type="compositionally biased region" description="Polar residues" evidence="5">
    <location>
        <begin position="112"/>
        <end position="124"/>
    </location>
</feature>
<feature type="compositionally biased region" description="Basic and acidic residues" evidence="5">
    <location>
        <begin position="136"/>
        <end position="156"/>
    </location>
</feature>
<feature type="compositionally biased region" description="Low complexity" evidence="5">
    <location>
        <begin position="162"/>
        <end position="174"/>
    </location>
</feature>
<feature type="compositionally biased region" description="Basic residues" evidence="5">
    <location>
        <begin position="239"/>
        <end position="248"/>
    </location>
</feature>
<feature type="compositionally biased region" description="Basic and acidic residues" evidence="5">
    <location>
        <begin position="249"/>
        <end position="265"/>
    </location>
</feature>
<feature type="compositionally biased region" description="Basic and acidic residues" evidence="5">
    <location>
        <begin position="271"/>
        <end position="304"/>
    </location>
</feature>
<feature type="compositionally biased region" description="Basic and acidic residues" evidence="5">
    <location>
        <begin position="317"/>
        <end position="339"/>
    </location>
</feature>
<feature type="compositionally biased region" description="Basic and acidic residues" evidence="5">
    <location>
        <begin position="368"/>
        <end position="380"/>
    </location>
</feature>
<feature type="compositionally biased region" description="Low complexity" evidence="5">
    <location>
        <begin position="704"/>
        <end position="718"/>
    </location>
</feature>
<feature type="compositionally biased region" description="Polar residues" evidence="5">
    <location>
        <begin position="728"/>
        <end position="744"/>
    </location>
</feature>
<feature type="modified residue" description="Phosphoserine" evidence="9">
    <location>
        <position position="195"/>
    </location>
</feature>
<feature type="modified residue" description="Phosphoserine" evidence="2">
    <location>
        <position position="310"/>
    </location>
</feature>
<feature type="modified residue" description="Phosphoserine" evidence="1">
    <location>
        <position position="380"/>
    </location>
</feature>
<feature type="modified residue" description="Phosphoserine" evidence="1">
    <location>
        <position position="383"/>
    </location>
</feature>
<feature type="modified residue" description="N6-acetyllysine" evidence="2">
    <location>
        <position position="430"/>
    </location>
</feature>
<feature type="modified residue" description="Phosphoserine" evidence="1">
    <location>
        <position position="515"/>
    </location>
</feature>
<feature type="mutagenesis site" description="Reduces transcription activity." evidence="8">
    <original>T</original>
    <variation>I</variation>
    <location>
        <position position="549"/>
    </location>
</feature>
<feature type="mutagenesis site" description="Reduces transcription activity and abolishes heterotrimeric formation." evidence="8">
    <original>L</original>
    <variation>S</variation>
    <location>
        <position position="550"/>
    </location>
</feature>
<feature type="mutagenesis site" description="Reduces transcription activity." evidence="8">
    <original>C</original>
    <variation>F</variation>
    <location>
        <position position="554"/>
    </location>
</feature>
<name>ELOA1_RAT</name>
<accession>Q63187</accession>
<dbReference type="EMBL" id="L46816">
    <property type="protein sequence ID" value="AAA82095.1"/>
    <property type="molecule type" value="mRNA"/>
</dbReference>
<dbReference type="PIR" id="A57244">
    <property type="entry name" value="A57244"/>
</dbReference>
<dbReference type="SMR" id="Q63187"/>
<dbReference type="CORUM" id="Q63187"/>
<dbReference type="FunCoup" id="Q63187">
    <property type="interactions" value="3290"/>
</dbReference>
<dbReference type="IntAct" id="Q63187">
    <property type="interactions" value="5"/>
</dbReference>
<dbReference type="MINT" id="Q63187"/>
<dbReference type="STRING" id="10116.ENSRNOP00000059109"/>
<dbReference type="iPTMnet" id="Q63187"/>
<dbReference type="PhosphoSitePlus" id="Q63187"/>
<dbReference type="PaxDb" id="10116-ENSRNOP00000059109"/>
<dbReference type="UCSC" id="RGD:3827">
    <property type="organism name" value="rat"/>
</dbReference>
<dbReference type="AGR" id="RGD:3827"/>
<dbReference type="RGD" id="3827">
    <property type="gene designation" value="Eloa"/>
</dbReference>
<dbReference type="eggNOG" id="KOG2821">
    <property type="taxonomic scope" value="Eukaryota"/>
</dbReference>
<dbReference type="InParanoid" id="Q63187"/>
<dbReference type="PhylomeDB" id="Q63187"/>
<dbReference type="Reactome" id="R-RNO-112382">
    <property type="pathway name" value="Formation of RNA Pol II elongation complex"/>
</dbReference>
<dbReference type="Reactome" id="R-RNO-674695">
    <property type="pathway name" value="RNA Polymerase II Pre-transcription Events"/>
</dbReference>
<dbReference type="Reactome" id="R-RNO-6796648">
    <property type="pathway name" value="TP53 Regulates Transcription of DNA Repair Genes"/>
</dbReference>
<dbReference type="Reactome" id="R-RNO-75955">
    <property type="pathway name" value="RNA Polymerase II Transcription Elongation"/>
</dbReference>
<dbReference type="PRO" id="PR:Q63187"/>
<dbReference type="Proteomes" id="UP000002494">
    <property type="component" value="Unplaced"/>
</dbReference>
<dbReference type="GO" id="GO:0070449">
    <property type="term" value="C:elongin complex"/>
    <property type="evidence" value="ECO:0000266"/>
    <property type="project" value="RGD"/>
</dbReference>
<dbReference type="GO" id="GO:0090734">
    <property type="term" value="C:site of DNA damage"/>
    <property type="evidence" value="ECO:0000314"/>
    <property type="project" value="UniProtKB"/>
</dbReference>
<dbReference type="GO" id="GO:0008023">
    <property type="term" value="C:transcription elongation factor complex"/>
    <property type="evidence" value="ECO:0000314"/>
    <property type="project" value="UniProtKB"/>
</dbReference>
<dbReference type="GO" id="GO:0003690">
    <property type="term" value="F:double-stranded DNA binding"/>
    <property type="evidence" value="ECO:0000304"/>
    <property type="project" value="RGD"/>
</dbReference>
<dbReference type="GO" id="GO:0006357">
    <property type="term" value="P:regulation of transcription by RNA polymerase II"/>
    <property type="evidence" value="ECO:0000314"/>
    <property type="project" value="RGD"/>
</dbReference>
<dbReference type="GO" id="GO:0006368">
    <property type="term" value="P:transcription elongation by RNA polymerase II"/>
    <property type="evidence" value="ECO:0000314"/>
    <property type="project" value="UniProtKB"/>
</dbReference>
<dbReference type="GO" id="GO:0006367">
    <property type="term" value="P:transcription initiation at RNA polymerase II promoter"/>
    <property type="evidence" value="ECO:0000266"/>
    <property type="project" value="RGD"/>
</dbReference>
<dbReference type="CDD" id="cd00183">
    <property type="entry name" value="TFIIS_I"/>
    <property type="match status" value="1"/>
</dbReference>
<dbReference type="FunFam" id="1.20.930.10:FF:000010">
    <property type="entry name" value="elongin-A isoform X1"/>
    <property type="match status" value="1"/>
</dbReference>
<dbReference type="Gene3D" id="6.10.250.3180">
    <property type="match status" value="1"/>
</dbReference>
<dbReference type="Gene3D" id="1.20.930.10">
    <property type="entry name" value="Conserved domain common to transcription factors TFIIS, elongin A, CRSP70"/>
    <property type="match status" value="1"/>
</dbReference>
<dbReference type="InterPro" id="IPR051870">
    <property type="entry name" value="Elongin-A_domain"/>
</dbReference>
<dbReference type="InterPro" id="IPR001810">
    <property type="entry name" value="F-box_dom"/>
</dbReference>
<dbReference type="InterPro" id="IPR010684">
    <property type="entry name" value="RNA_pol_II_trans_fac_SIII_A"/>
</dbReference>
<dbReference type="InterPro" id="IPR003617">
    <property type="entry name" value="TFIIS/CRSP70_N_sub"/>
</dbReference>
<dbReference type="InterPro" id="IPR035441">
    <property type="entry name" value="TFIIS/LEDGF_dom_sf"/>
</dbReference>
<dbReference type="InterPro" id="IPR017923">
    <property type="entry name" value="TFIIS_N"/>
</dbReference>
<dbReference type="PANTHER" id="PTHR15141:SF75">
    <property type="entry name" value="ELONGIN-A"/>
    <property type="match status" value="1"/>
</dbReference>
<dbReference type="PANTHER" id="PTHR15141">
    <property type="entry name" value="TRANSCRIPTION ELONGATION FACTOR B POLYPEPTIDE 3"/>
    <property type="match status" value="1"/>
</dbReference>
<dbReference type="Pfam" id="PF06881">
    <property type="entry name" value="Elongin_A"/>
    <property type="match status" value="1"/>
</dbReference>
<dbReference type="Pfam" id="PF08711">
    <property type="entry name" value="Med26"/>
    <property type="match status" value="1"/>
</dbReference>
<dbReference type="SMART" id="SM00509">
    <property type="entry name" value="TFS2N"/>
    <property type="match status" value="1"/>
</dbReference>
<dbReference type="SUPFAM" id="SSF47676">
    <property type="entry name" value="Conserved domain common to transcription factors TFIIS, elongin A, CRSP70"/>
    <property type="match status" value="1"/>
</dbReference>
<dbReference type="PROSITE" id="PS50181">
    <property type="entry name" value="FBOX"/>
    <property type="match status" value="1"/>
</dbReference>
<dbReference type="PROSITE" id="PS51319">
    <property type="entry name" value="TFIIS_N"/>
    <property type="match status" value="1"/>
</dbReference>
<keyword id="KW-0007">Acetylation</keyword>
<keyword id="KW-0539">Nucleus</keyword>
<keyword id="KW-0597">Phosphoprotein</keyword>
<keyword id="KW-1185">Reference proteome</keyword>
<keyword id="KW-0804">Transcription</keyword>
<keyword id="KW-0805">Transcription regulation</keyword>
<organism>
    <name type="scientific">Rattus norvegicus</name>
    <name type="common">Rat</name>
    <dbReference type="NCBI Taxonomy" id="10116"/>
    <lineage>
        <taxon>Eukaryota</taxon>
        <taxon>Metazoa</taxon>
        <taxon>Chordata</taxon>
        <taxon>Craniata</taxon>
        <taxon>Vertebrata</taxon>
        <taxon>Euteleostomi</taxon>
        <taxon>Mammalia</taxon>
        <taxon>Eutheria</taxon>
        <taxon>Euarchontoglires</taxon>
        <taxon>Glires</taxon>
        <taxon>Rodentia</taxon>
        <taxon>Myomorpha</taxon>
        <taxon>Muroidea</taxon>
        <taxon>Muridae</taxon>
        <taxon>Murinae</taxon>
        <taxon>Rattus</taxon>
    </lineage>
</organism>
<reference key="1">
    <citation type="journal article" date="1995" name="Science">
        <title>Elongin (SIII): a multisubunit regulator of elongation by RNA polymerase II.</title>
        <authorList>
            <person name="Aso T."/>
            <person name="Lane W.S."/>
            <person name="Conaway J.W."/>
            <person name="Conaway R.C."/>
        </authorList>
    </citation>
    <scope>NUCLEOTIDE SEQUENCE [MRNA]</scope>
    <source>
        <strain>Sprague-Dawley</strain>
        <tissue>Brain</tissue>
    </source>
</reference>
<reference key="2">
    <citation type="journal article" date="1993" name="J. Biol. Chem.">
        <title>RNA polymerase II transcription factor SIII. I. Identification, purification, and properties.</title>
        <authorList>
            <person name="Bradsher J.N."/>
            <person name="Jackson K.W."/>
            <person name="Conaway R.C."/>
            <person name="Conaway J.W."/>
        </authorList>
    </citation>
    <scope>FUNCTION</scope>
    <scope>SUBUNIT</scope>
    <source>
        <strain>Sprague-Dawley</strain>
        <tissue>Brain</tissue>
    </source>
</reference>
<reference key="3">
    <citation type="journal article" date="1996" name="EMBO J.">
        <title>The inducible elongin A elongation activation domain: structure, function and interaction with the elongin BC complex.</title>
        <authorList>
            <person name="Aso T."/>
            <person name="Haque D."/>
            <person name="Barstead R.J."/>
            <person name="Conaway R.C."/>
            <person name="Conaway J.W."/>
        </authorList>
    </citation>
    <scope>FUNCTION</scope>
    <scope>ACTIVATION DOMAIN</scope>
    <scope>INTERACTION WITH ELONGIN BC COMPLEX</scope>
    <scope>MUTAGENESIS OF THR-549; LEU-550 AND CYS-554</scope>
</reference>
<reference key="4">
    <citation type="journal article" date="2012" name="Nat. Commun.">
        <title>Quantitative maps of protein phosphorylation sites across 14 different rat organs and tissues.</title>
        <authorList>
            <person name="Lundby A."/>
            <person name="Secher A."/>
            <person name="Lage K."/>
            <person name="Nordsborg N.B."/>
            <person name="Dmytriyev A."/>
            <person name="Lundby C."/>
            <person name="Olsen J.V."/>
        </authorList>
    </citation>
    <scope>PHOSPHORYLATION [LARGE SCALE ANALYSIS] AT SER-195</scope>
    <scope>IDENTIFICATION BY MASS SPECTROMETRY [LARGE SCALE ANALYSIS]</scope>
</reference>
<reference key="5">
    <citation type="journal article" date="2017" name="J. Biol. Chem.">
        <title>Cockayne syndrome B protein regulates recruitment of the Elongin A ubiquitin ligase to sites of DNA damage.</title>
        <authorList>
            <person name="Weems J.C."/>
            <person name="Slaughter B.D."/>
            <person name="Unruh J.R."/>
            <person name="Boeing S."/>
            <person name="Hall S.M."/>
            <person name="McLaird M.B."/>
            <person name="Yasukawa T."/>
            <person name="Aso T."/>
            <person name="Svejstrup J.Q."/>
            <person name="Conaway J.W."/>
            <person name="Conaway R.C."/>
        </authorList>
    </citation>
    <scope>INTERACTION WITH ERCC6 AND CUL5</scope>
</reference>
<evidence type="ECO:0000250" key="1">
    <source>
        <dbReference type="UniProtKB" id="Q14241"/>
    </source>
</evidence>
<evidence type="ECO:0000250" key="2">
    <source>
        <dbReference type="UniProtKB" id="Q8CB77"/>
    </source>
</evidence>
<evidence type="ECO:0000255" key="3">
    <source>
        <dbReference type="PROSITE-ProRule" id="PRU00080"/>
    </source>
</evidence>
<evidence type="ECO:0000255" key="4">
    <source>
        <dbReference type="PROSITE-ProRule" id="PRU00649"/>
    </source>
</evidence>
<evidence type="ECO:0000256" key="5">
    <source>
        <dbReference type="SAM" id="MobiDB-lite"/>
    </source>
</evidence>
<evidence type="ECO:0000269" key="6">
    <source>
    </source>
</evidence>
<evidence type="ECO:0000269" key="7">
    <source>
    </source>
</evidence>
<evidence type="ECO:0000269" key="8">
    <source>
    </source>
</evidence>
<evidence type="ECO:0007744" key="9">
    <source>
    </source>
</evidence>
<sequence length="773" mass="87203">MAAESALQVVEKLQARLAANPDPKKLLKYLKKLSVLPITVDILVETGVGKTVNSFRKHEQVGNFARDLVAQWKKLVPVERNNEAEDQDFEKSNSRKRPRDVPQQEEEAEGNYQESWQASGSQPYSPEHRQKKHRKLPELERPHKVAHGHERRDERKRCHKVSPPYSSDPESSDYGHVQSPPPSSPHQMYTDLSRSPEMDQEPIVSHPKPGKVHSNTFQDRLGVSHLGEHQGKGAVSQNKPHKSSHKEKRPVDARGDEKSSVMGREKSHKASSKEESRRLLSEDSAKEKLPSSVVKKEKDREGNSLKKKLSPALDVASDNHFKKPKHKDSEKIKSDKNKQSVDSVDSGRGTGDPLPRAKDKVPNNLKAQEGKVRTNSDRKSPGSLPKVEEMDMDDEFEQPTMSFESYLSYDQPRKKKKKVVKTSGTALGEKGLKKKDSKSTSKNLNSAQKLPKANENKSDKLQPAGAEPTRPRKVPTDVLPALPDIPLPAIQTNYRPLPSLELISSFQPKRKAFSSPQEEEEAGFTGRRMNSKMQVYSGSKCAYLPKMMTLHQQCIRVLKNNIDSIFEVGGVPYSVLEPVLERCTPDQLYRIEECNHVLIEETDQLWKVHCHRDFKEERPEEYESWREMYLRLQDAREQRLRLLTNNIRSAHANKPKGRQAKMAFVNSVAKPPRDVRRRQEKFGTGGAAVPEKVRIKPAPYTTGSSHVPASNSSSSFHSSPEELAYEGPSTSSAHLAPVASSSVSYDPRKPAVKKIAPMMAKTIKAFKNRFSRR</sequence>
<proteinExistence type="evidence at protein level"/>
<comment type="function">
    <text evidence="7 8">SIII, also known as elongin, is a general transcription elongation factor that increases the RNA polymerase II transcription elongation past template-encoded arresting sites. Subunit A is transcriptionally active and its transcription activity is strongly enhanced by binding to the dimeric complex of the SIII regulatory subunits B and C (elongin BC complex).</text>
</comment>
<comment type="function">
    <text evidence="1">As part of a multisubunit complex composed of elongin BC complex (ELOB and ELOC), elongin A/ELOA, RBX1 and CUL5; polyubiquitinates monoubiquitinated POLR2A.</text>
</comment>
<comment type="subunit">
    <text evidence="1 6 7">Heterotrimer of an A (ELOA, ELOA2 or ELOA3P), ELOB and ELOC subunit (PubMed:8244996, PubMed:8896449). Part of a multisubunit ubiquitin ligase complex consisting of elongin BC complex (ELOB and ELOC), elongin A/ELOA, RBX1 and CUL5 (By similarity). Interacts with ERCC6; the interaction is induced by DNA damaging agents or inhibitors of RNA polymerase II elongation (PubMed:28292928). Interacts (via BC-box) with CUL5 (PubMed:28292928).</text>
</comment>
<comment type="subcellular location">
    <subcellularLocation>
        <location evidence="1">Nucleus</location>
    </subcellularLocation>
    <text evidence="1">Localizes to sites of DNA damage.</text>
</comment>
<comment type="domain">
    <text evidence="8">The BC-box, which mediates binding to the elongin BC complex, has the consensus sequence [APST]-L-x(3)-C-x(3)-[AILV].</text>
</comment>
<protein>
    <recommendedName>
        <fullName>Elongin-A</fullName>
        <shortName>EloA</shortName>
    </recommendedName>
    <alternativeName>
        <fullName>Elongin 110 kDa subunit</fullName>
    </alternativeName>
    <alternativeName>
        <fullName>RNA polymerase II transcription factor SIII subunit A1</fullName>
    </alternativeName>
    <alternativeName>
        <fullName>SIII p110</fullName>
    </alternativeName>
    <alternativeName>
        <fullName>Transcription elongation factor B polypeptide 3</fullName>
    </alternativeName>
</protein>